<protein>
    <recommendedName>
        <fullName evidence="1">Probable transcriptional regulatory protein FTM_1203</fullName>
    </recommendedName>
</protein>
<organism>
    <name type="scientific">Francisella tularensis subsp. mediasiatica (strain FSC147)</name>
    <dbReference type="NCBI Taxonomy" id="441952"/>
    <lineage>
        <taxon>Bacteria</taxon>
        <taxon>Pseudomonadati</taxon>
        <taxon>Pseudomonadota</taxon>
        <taxon>Gammaproteobacteria</taxon>
        <taxon>Thiotrichales</taxon>
        <taxon>Francisellaceae</taxon>
        <taxon>Francisella</taxon>
    </lineage>
</organism>
<accession>B2SH70</accession>
<comment type="subcellular location">
    <subcellularLocation>
        <location evidence="1">Cytoplasm</location>
    </subcellularLocation>
</comment>
<comment type="similarity">
    <text evidence="1">Belongs to the TACO1 family.</text>
</comment>
<dbReference type="EMBL" id="CP000915">
    <property type="protein sequence ID" value="ACD31078.1"/>
    <property type="molecule type" value="Genomic_DNA"/>
</dbReference>
<dbReference type="SMR" id="B2SH70"/>
<dbReference type="KEGG" id="ftm:FTM_1203"/>
<dbReference type="HOGENOM" id="CLU_062974_2_2_6"/>
<dbReference type="GO" id="GO:0005829">
    <property type="term" value="C:cytosol"/>
    <property type="evidence" value="ECO:0007669"/>
    <property type="project" value="TreeGrafter"/>
</dbReference>
<dbReference type="GO" id="GO:0003677">
    <property type="term" value="F:DNA binding"/>
    <property type="evidence" value="ECO:0007669"/>
    <property type="project" value="UniProtKB-UniRule"/>
</dbReference>
<dbReference type="GO" id="GO:0006355">
    <property type="term" value="P:regulation of DNA-templated transcription"/>
    <property type="evidence" value="ECO:0007669"/>
    <property type="project" value="UniProtKB-UniRule"/>
</dbReference>
<dbReference type="FunFam" id="1.10.10.200:FF:000001">
    <property type="entry name" value="Probable transcriptional regulatory protein YebC"/>
    <property type="match status" value="1"/>
</dbReference>
<dbReference type="FunFam" id="3.30.70.980:FF:000002">
    <property type="entry name" value="Probable transcriptional regulatory protein YebC"/>
    <property type="match status" value="1"/>
</dbReference>
<dbReference type="Gene3D" id="1.10.10.200">
    <property type="match status" value="1"/>
</dbReference>
<dbReference type="Gene3D" id="3.30.70.980">
    <property type="match status" value="2"/>
</dbReference>
<dbReference type="HAMAP" id="MF_00693">
    <property type="entry name" value="Transcrip_reg_TACO1"/>
    <property type="match status" value="1"/>
</dbReference>
<dbReference type="InterPro" id="IPR017856">
    <property type="entry name" value="Integrase-like_N"/>
</dbReference>
<dbReference type="InterPro" id="IPR048300">
    <property type="entry name" value="TACO1_YebC-like_2nd/3rd_dom"/>
</dbReference>
<dbReference type="InterPro" id="IPR049083">
    <property type="entry name" value="TACO1_YebC_N"/>
</dbReference>
<dbReference type="InterPro" id="IPR002876">
    <property type="entry name" value="Transcrip_reg_TACO1-like"/>
</dbReference>
<dbReference type="InterPro" id="IPR026564">
    <property type="entry name" value="Transcrip_reg_TACO1-like_dom3"/>
</dbReference>
<dbReference type="InterPro" id="IPR029072">
    <property type="entry name" value="YebC-like"/>
</dbReference>
<dbReference type="NCBIfam" id="NF001030">
    <property type="entry name" value="PRK00110.1"/>
    <property type="match status" value="1"/>
</dbReference>
<dbReference type="NCBIfam" id="NF009044">
    <property type="entry name" value="PRK12378.1"/>
    <property type="match status" value="1"/>
</dbReference>
<dbReference type="NCBIfam" id="TIGR01033">
    <property type="entry name" value="YebC/PmpR family DNA-binding transcriptional regulator"/>
    <property type="match status" value="1"/>
</dbReference>
<dbReference type="PANTHER" id="PTHR12532:SF6">
    <property type="entry name" value="TRANSCRIPTIONAL REGULATORY PROTEIN YEBC-RELATED"/>
    <property type="match status" value="1"/>
</dbReference>
<dbReference type="PANTHER" id="PTHR12532">
    <property type="entry name" value="TRANSLATIONAL ACTIVATOR OF CYTOCHROME C OXIDASE 1"/>
    <property type="match status" value="1"/>
</dbReference>
<dbReference type="Pfam" id="PF20772">
    <property type="entry name" value="TACO1_YebC_N"/>
    <property type="match status" value="1"/>
</dbReference>
<dbReference type="Pfam" id="PF01709">
    <property type="entry name" value="Transcrip_reg"/>
    <property type="match status" value="1"/>
</dbReference>
<dbReference type="SUPFAM" id="SSF75625">
    <property type="entry name" value="YebC-like"/>
    <property type="match status" value="1"/>
</dbReference>
<feature type="chain" id="PRO_1000132195" description="Probable transcriptional regulatory protein FTM_1203">
    <location>
        <begin position="1"/>
        <end position="248"/>
    </location>
</feature>
<keyword id="KW-0963">Cytoplasm</keyword>
<keyword id="KW-0238">DNA-binding</keyword>
<keyword id="KW-0804">Transcription</keyword>
<keyword id="KW-0805">Transcription regulation</keyword>
<reference key="1">
    <citation type="journal article" date="2009" name="PLoS Pathog.">
        <title>Molecular evolutionary consequences of niche restriction in Francisella tularensis, a facultative intracellular pathogen.</title>
        <authorList>
            <person name="Larsson P."/>
            <person name="Elfsmark D."/>
            <person name="Svensson K."/>
            <person name="Wikstroem P."/>
            <person name="Forsman M."/>
            <person name="Brettin T."/>
            <person name="Keim P."/>
            <person name="Johansson A."/>
        </authorList>
    </citation>
    <scope>NUCLEOTIDE SEQUENCE [LARGE SCALE GENOMIC DNA]</scope>
    <source>
        <strain>FSC147</strain>
    </source>
</reference>
<gene>
    <name type="ordered locus">FTM_1203</name>
</gene>
<proteinExistence type="inferred from homology"/>
<sequence length="248" mass="26841">MAGHSKWANIKHKKAKEDAKRGKIFTKLIREITVAARLGGGDKDANPRLRAAIATALANNMSKDTIERAVVKGAGGDESANVEEVRYEGYGPGGVAIIVDCMTDNRNRTVGEVRHAFTKSGGNLGTDGSVAYMFTKRGIISFAPGVDEDALMEVALEAGVEDIITHEDGSIDVYTDPHDFSDIQEVLIEKGFNSENAEVTFDAETKAELDTETAEKVMALIDKLEDLDDVQSVYSNANFTQELIEQIG</sequence>
<name>Y1203_FRATM</name>
<evidence type="ECO:0000255" key="1">
    <source>
        <dbReference type="HAMAP-Rule" id="MF_00693"/>
    </source>
</evidence>